<name>CLPS_CUPNH</name>
<comment type="function">
    <text evidence="1">Involved in the modulation of the specificity of the ClpAP-mediated ATP-dependent protein degradation.</text>
</comment>
<comment type="subunit">
    <text evidence="1">Binds to the N-terminal domain of the chaperone ClpA.</text>
</comment>
<comment type="similarity">
    <text evidence="1">Belongs to the ClpS family.</text>
</comment>
<evidence type="ECO:0000255" key="1">
    <source>
        <dbReference type="HAMAP-Rule" id="MF_00302"/>
    </source>
</evidence>
<accession>Q0K793</accession>
<keyword id="KW-1185">Reference proteome</keyword>
<reference key="1">
    <citation type="journal article" date="2006" name="Nat. Biotechnol.">
        <title>Genome sequence of the bioplastic-producing 'Knallgas' bacterium Ralstonia eutropha H16.</title>
        <authorList>
            <person name="Pohlmann A."/>
            <person name="Fricke W.F."/>
            <person name="Reinecke F."/>
            <person name="Kusian B."/>
            <person name="Liesegang H."/>
            <person name="Cramm R."/>
            <person name="Eitinger T."/>
            <person name="Ewering C."/>
            <person name="Poetter M."/>
            <person name="Schwartz E."/>
            <person name="Strittmatter A."/>
            <person name="Voss I."/>
            <person name="Gottschalk G."/>
            <person name="Steinbuechel A."/>
            <person name="Friedrich B."/>
            <person name="Bowien B."/>
        </authorList>
    </citation>
    <scope>NUCLEOTIDE SEQUENCE [LARGE SCALE GENOMIC DNA]</scope>
    <source>
        <strain>ATCC 17699 / DSM 428 / KCTC 22496 / NCIMB 10442 / H16 / Stanier 337</strain>
    </source>
</reference>
<gene>
    <name evidence="1" type="primary">clpS</name>
    <name type="ordered locus">H16_A3053</name>
</gene>
<feature type="chain" id="PRO_1000022618" description="ATP-dependent Clp protease adapter protein ClpS">
    <location>
        <begin position="1"/>
        <end position="108"/>
    </location>
</feature>
<dbReference type="EMBL" id="AM260479">
    <property type="protein sequence ID" value="CAJ94128.1"/>
    <property type="molecule type" value="Genomic_DNA"/>
</dbReference>
<dbReference type="RefSeq" id="WP_010814998.1">
    <property type="nucleotide sequence ID" value="NZ_CP039287.1"/>
</dbReference>
<dbReference type="SMR" id="Q0K793"/>
<dbReference type="STRING" id="381666.H16_A3053"/>
<dbReference type="GeneID" id="34310694"/>
<dbReference type="KEGG" id="reh:H16_A3053"/>
<dbReference type="eggNOG" id="COG2127">
    <property type="taxonomic scope" value="Bacteria"/>
</dbReference>
<dbReference type="HOGENOM" id="CLU_134358_2_1_4"/>
<dbReference type="OrthoDB" id="9796121at2"/>
<dbReference type="Proteomes" id="UP000008210">
    <property type="component" value="Chromosome 1"/>
</dbReference>
<dbReference type="GO" id="GO:0030163">
    <property type="term" value="P:protein catabolic process"/>
    <property type="evidence" value="ECO:0007669"/>
    <property type="project" value="InterPro"/>
</dbReference>
<dbReference type="GO" id="GO:0006508">
    <property type="term" value="P:proteolysis"/>
    <property type="evidence" value="ECO:0007669"/>
    <property type="project" value="UniProtKB-UniRule"/>
</dbReference>
<dbReference type="FunFam" id="3.30.1390.10:FF:000002">
    <property type="entry name" value="ATP-dependent Clp protease adapter protein ClpS"/>
    <property type="match status" value="1"/>
</dbReference>
<dbReference type="Gene3D" id="3.30.1390.10">
    <property type="match status" value="1"/>
</dbReference>
<dbReference type="HAMAP" id="MF_00302">
    <property type="entry name" value="ClpS"/>
    <property type="match status" value="1"/>
</dbReference>
<dbReference type="InterPro" id="IPR022935">
    <property type="entry name" value="ClpS"/>
</dbReference>
<dbReference type="InterPro" id="IPR003769">
    <property type="entry name" value="ClpS_core"/>
</dbReference>
<dbReference type="InterPro" id="IPR014719">
    <property type="entry name" value="Ribosomal_bL12_C/ClpS-like"/>
</dbReference>
<dbReference type="NCBIfam" id="NF000672">
    <property type="entry name" value="PRK00033.1-5"/>
    <property type="match status" value="1"/>
</dbReference>
<dbReference type="PANTHER" id="PTHR33473:SF19">
    <property type="entry name" value="ATP-DEPENDENT CLP PROTEASE ADAPTER PROTEIN CLPS"/>
    <property type="match status" value="1"/>
</dbReference>
<dbReference type="PANTHER" id="PTHR33473">
    <property type="entry name" value="ATP-DEPENDENT CLP PROTEASE ADAPTER PROTEIN CLPS1, CHLOROPLASTIC"/>
    <property type="match status" value="1"/>
</dbReference>
<dbReference type="Pfam" id="PF02617">
    <property type="entry name" value="ClpS"/>
    <property type="match status" value="1"/>
</dbReference>
<dbReference type="SUPFAM" id="SSF54736">
    <property type="entry name" value="ClpS-like"/>
    <property type="match status" value="1"/>
</dbReference>
<protein>
    <recommendedName>
        <fullName evidence="1">ATP-dependent Clp protease adapter protein ClpS</fullName>
    </recommendedName>
</protein>
<organism>
    <name type="scientific">Cupriavidus necator (strain ATCC 17699 / DSM 428 / KCTC 22496 / NCIMB 10442 / H16 / Stanier 337)</name>
    <name type="common">Ralstonia eutropha</name>
    <dbReference type="NCBI Taxonomy" id="381666"/>
    <lineage>
        <taxon>Bacteria</taxon>
        <taxon>Pseudomonadati</taxon>
        <taxon>Pseudomonadota</taxon>
        <taxon>Betaproteobacteria</taxon>
        <taxon>Burkholderiales</taxon>
        <taxon>Burkholderiaceae</taxon>
        <taxon>Cupriavidus</taxon>
    </lineage>
</organism>
<sequence length="108" mass="12204">MATRLANVPQREAGTILERKEQALKPPAMFKVVLLNDDYTPMEFVVMILQQYFSRDRETATQIMLTVHREGKGVCGIYTRDIAATKVELVSTHARQAGHPLQCVMEEA</sequence>
<proteinExistence type="inferred from homology"/>